<protein>
    <recommendedName>
        <fullName evidence="1">ATP synthase F(0) complex subunit a</fullName>
    </recommendedName>
    <alternativeName>
        <fullName>F-ATPase protein 6</fullName>
    </alternativeName>
    <alternativeName>
        <fullName evidence="1">Proton-conducting channel, ATP synthase F(0) complex subunit a</fullName>
    </alternativeName>
</protein>
<dbReference type="EMBL" id="U12143">
    <property type="protein sequence ID" value="AAD04738.1"/>
    <property type="molecule type" value="Genomic_DNA"/>
</dbReference>
<dbReference type="EMBL" id="AF133701">
    <property type="protein sequence ID" value="AAF61383.1"/>
    <property type="molecule type" value="Genomic_DNA"/>
</dbReference>
<dbReference type="EMBL" id="D84148">
    <property type="protein sequence ID" value="BAA20157.1"/>
    <property type="molecule type" value="Genomic_DNA"/>
</dbReference>
<dbReference type="EMBL" id="L04502">
    <property type="protein sequence ID" value="AAA62408.1"/>
    <property type="molecule type" value="Genomic_DNA"/>
</dbReference>
<dbReference type="PIR" id="T09952">
    <property type="entry name" value="T09952"/>
</dbReference>
<dbReference type="RefSeq" id="NP_008450.1">
    <property type="nucleotide sequence ID" value="NC_001960.1"/>
</dbReference>
<dbReference type="SMR" id="Q35920"/>
<dbReference type="STRING" id="8030.ENSSSAP00000000007"/>
<dbReference type="PaxDb" id="8030-ENSSSAP00000000007"/>
<dbReference type="GeneID" id="808313"/>
<dbReference type="KEGG" id="sasa:808313"/>
<dbReference type="CTD" id="4508"/>
<dbReference type="Proteomes" id="UP000087266">
    <property type="component" value="Mitochondrion MT"/>
</dbReference>
<dbReference type="Bgee" id="ENSSSAG00000000023">
    <property type="expression patterns" value="Expressed in mesonephros and 25 other cell types or tissues"/>
</dbReference>
<dbReference type="GO" id="GO:0005743">
    <property type="term" value="C:mitochondrial inner membrane"/>
    <property type="evidence" value="ECO:0007669"/>
    <property type="project" value="UniProtKB-SubCell"/>
</dbReference>
<dbReference type="GO" id="GO:0045259">
    <property type="term" value="C:proton-transporting ATP synthase complex"/>
    <property type="evidence" value="ECO:0000250"/>
    <property type="project" value="UniProtKB"/>
</dbReference>
<dbReference type="GO" id="GO:0015252">
    <property type="term" value="F:proton channel activity"/>
    <property type="evidence" value="ECO:0000250"/>
    <property type="project" value="UniProtKB"/>
</dbReference>
<dbReference type="GO" id="GO:0046933">
    <property type="term" value="F:proton-transporting ATP synthase activity, rotational mechanism"/>
    <property type="evidence" value="ECO:0007669"/>
    <property type="project" value="TreeGrafter"/>
</dbReference>
<dbReference type="GO" id="GO:0015986">
    <property type="term" value="P:proton motive force-driven ATP synthesis"/>
    <property type="evidence" value="ECO:0000250"/>
    <property type="project" value="UniProtKB"/>
</dbReference>
<dbReference type="GO" id="GO:1902600">
    <property type="term" value="P:proton transmembrane transport"/>
    <property type="evidence" value="ECO:0000250"/>
    <property type="project" value="UniProtKB"/>
</dbReference>
<dbReference type="CDD" id="cd00310">
    <property type="entry name" value="ATP-synt_Fo_a_6"/>
    <property type="match status" value="1"/>
</dbReference>
<dbReference type="FunFam" id="1.20.120.220:FF:000004">
    <property type="entry name" value="ATP synthase subunit a"/>
    <property type="match status" value="1"/>
</dbReference>
<dbReference type="Gene3D" id="1.20.120.220">
    <property type="entry name" value="ATP synthase, F0 complex, subunit A"/>
    <property type="match status" value="1"/>
</dbReference>
<dbReference type="InterPro" id="IPR000568">
    <property type="entry name" value="ATP_synth_F0_asu"/>
</dbReference>
<dbReference type="InterPro" id="IPR023011">
    <property type="entry name" value="ATP_synth_F0_asu_AS"/>
</dbReference>
<dbReference type="InterPro" id="IPR045083">
    <property type="entry name" value="ATP_synth_F0_asu_bact/mt"/>
</dbReference>
<dbReference type="InterPro" id="IPR035908">
    <property type="entry name" value="F0_ATP_A_sf"/>
</dbReference>
<dbReference type="NCBIfam" id="TIGR01131">
    <property type="entry name" value="ATP_synt_6_or_A"/>
    <property type="match status" value="1"/>
</dbReference>
<dbReference type="PANTHER" id="PTHR11410">
    <property type="entry name" value="ATP SYNTHASE SUBUNIT A"/>
    <property type="match status" value="1"/>
</dbReference>
<dbReference type="PANTHER" id="PTHR11410:SF0">
    <property type="entry name" value="ATP SYNTHASE SUBUNIT A"/>
    <property type="match status" value="1"/>
</dbReference>
<dbReference type="Pfam" id="PF00119">
    <property type="entry name" value="ATP-synt_A"/>
    <property type="match status" value="1"/>
</dbReference>
<dbReference type="PRINTS" id="PR00123">
    <property type="entry name" value="ATPASEA"/>
</dbReference>
<dbReference type="SUPFAM" id="SSF81336">
    <property type="entry name" value="F1F0 ATP synthase subunit A"/>
    <property type="match status" value="1"/>
</dbReference>
<dbReference type="PROSITE" id="PS00449">
    <property type="entry name" value="ATPASE_A"/>
    <property type="match status" value="1"/>
</dbReference>
<feature type="chain" id="PRO_0000082167" description="ATP synthase F(0) complex subunit a">
    <location>
        <begin position="1"/>
        <end position="227"/>
    </location>
</feature>
<feature type="transmembrane region" description="Helical" evidence="2">
    <location>
        <begin position="12"/>
        <end position="32"/>
    </location>
</feature>
<feature type="transmembrane region" description="Helical" evidence="2">
    <location>
        <begin position="69"/>
        <end position="89"/>
    </location>
</feature>
<feature type="transmembrane region" description="Helical" evidence="2">
    <location>
        <begin position="98"/>
        <end position="118"/>
    </location>
</feature>
<feature type="transmembrane region" description="Helical" evidence="2">
    <location>
        <begin position="132"/>
        <end position="152"/>
    </location>
</feature>
<feature type="transmembrane region" description="Helical" evidence="2">
    <location>
        <begin position="180"/>
        <end position="200"/>
    </location>
</feature>
<feature type="transmembrane region" description="Helical" evidence="2">
    <location>
        <begin position="202"/>
        <end position="222"/>
    </location>
</feature>
<feature type="sequence conflict" description="In Ref. 3; no nucleotide entry." evidence="3" ref="3">
    <original>Q</original>
    <variation>E</variation>
    <location>
        <position position="8"/>
    </location>
</feature>
<feature type="sequence conflict" description="In Ref. 3; no nucleotide entry." evidence="3" ref="3">
    <original>LTSLMLFLITLNML</original>
    <variation>QLPNMFFITSNNLM</variation>
    <location>
        <begin position="73"/>
        <end position="86"/>
    </location>
</feature>
<feature type="sequence conflict" description="In Ref. 3; no nucleotide entry." evidence="3" ref="3">
    <original>Y</original>
    <variation>H</variation>
    <location>
        <position position="91"/>
    </location>
</feature>
<feature type="sequence conflict" description="In Ref. 3; no nucleotide entry." evidence="3" ref="3">
    <original>TTQ</original>
    <variation>HTL</variation>
    <location>
        <begin position="96"/>
        <end position="98"/>
    </location>
</feature>
<accession>Q35920</accession>
<reference key="1">
    <citation type="journal article" date="1999" name="Gene">
        <title>The complete mitochondrial DNA sequence of the Atlantic salmon, Salmo salar.</title>
        <authorList>
            <person name="Hurst C.D."/>
            <person name="Bartlett S.E."/>
            <person name="Davidson W.S."/>
            <person name="Bruce I.J."/>
        </authorList>
    </citation>
    <scope>NUCLEOTIDE SEQUENCE [GENOMIC DNA]</scope>
    <source>
        <tissue>Liver</tissue>
    </source>
</reference>
<reference key="2">
    <citation type="submission" date="1999-03" db="EMBL/GenBank/DDBJ databases">
        <title>The complete mitochondrial genome sequence of a teleost, Salmo salar, and comparisons with other salmoniformes.</title>
        <authorList>
            <person name="Arnason U."/>
            <person name="Johnsson E."/>
            <person name="Rasmussen A.S."/>
        </authorList>
    </citation>
    <scope>NUCLEOTIDE SEQUENCE [GENOMIC DNA]</scope>
</reference>
<reference key="3">
    <citation type="journal article" date="1989" name="Genome">
        <title>Organisation of the mitochondrial genome from Atlantic salmon (Salmo salar).</title>
        <authorList>
            <person name="Davidson W.S."/>
            <person name="Birt T.P."/>
            <person name="Green J.M."/>
        </authorList>
    </citation>
    <scope>NUCLEOTIDE SEQUENCE [GENOMIC DNA] OF 4-98</scope>
</reference>
<reference key="4">
    <citation type="journal article" date="1997" name="Mol. Phylogenet. Evol.">
        <title>Mitochondrial DNA sequence analysis of the masu salmon -- phylogeny in the genus Oncorhynchus.</title>
        <authorList>
            <person name="Oohara I."/>
            <person name="Sawano K."/>
            <person name="Okazaki T."/>
        </authorList>
    </citation>
    <scope>NUCLEOTIDE SEQUENCE [GENOMIC DNA] OF 9-227</scope>
</reference>
<reference key="5">
    <citation type="journal article" date="1994" name="Mol. Mar. Biol. Biotechnol.">
        <title>Cloning and sequencing of the Atlantic salmon (Salmo salar) cytochrome c oxidase subunit III gene (coxIII) and analysis of coxIII expression during parr-smolt transformation.</title>
        <authorList>
            <person name="Hardiman G."/>
            <person name="Byrnes L."/>
            <person name="Peden J."/>
            <person name="Wolff J."/>
            <person name="Gannon F."/>
        </authorList>
    </citation>
    <scope>NUCLEOTIDE SEQUENCE [GENOMIC DNA] OF 220-227</scope>
    <source>
        <tissue>Liver</tissue>
    </source>
</reference>
<evidence type="ECO:0000250" key="1">
    <source>
        <dbReference type="UniProtKB" id="P00846"/>
    </source>
</evidence>
<evidence type="ECO:0000255" key="2"/>
<evidence type="ECO:0000305" key="3"/>
<sequence length="227" mass="25108">MTLSFFDQFMSPTYLGIPLIAVALTLPWILFPTPSTRWLNNRLITLQGWFINRFTQQLLLPLNLGGHKWAVLLTSLMLFLITLNMLGLLPYTFTPTTQLSLNMGLAVPLWLATVIIGMRNQPTAALGHLLPEGTPVPLIPVLIIIETISLFIRPLALGVRLTANLTAGHLLIQLIATAAFVLMPIMPTVAILTSIVLFLLTLLEIAVAMIQAYVFVLLLSLYLQENV</sequence>
<gene>
    <name evidence="1" type="primary">mt-atp6</name>
    <name type="synonym">atp6</name>
    <name type="synonym">atpase6</name>
    <name type="synonym">mtatp6</name>
</gene>
<geneLocation type="mitochondrion"/>
<organism>
    <name type="scientific">Salmo salar</name>
    <name type="common">Atlantic salmon</name>
    <dbReference type="NCBI Taxonomy" id="8030"/>
    <lineage>
        <taxon>Eukaryota</taxon>
        <taxon>Metazoa</taxon>
        <taxon>Chordata</taxon>
        <taxon>Craniata</taxon>
        <taxon>Vertebrata</taxon>
        <taxon>Euteleostomi</taxon>
        <taxon>Actinopterygii</taxon>
        <taxon>Neopterygii</taxon>
        <taxon>Teleostei</taxon>
        <taxon>Protacanthopterygii</taxon>
        <taxon>Salmoniformes</taxon>
        <taxon>Salmonidae</taxon>
        <taxon>Salmoninae</taxon>
        <taxon>Salmo</taxon>
    </lineage>
</organism>
<comment type="function">
    <text evidence="1">Subunit a, of the mitochondrial membrane ATP synthase complex (F(1)F(0) ATP synthase or Complex V) that produces ATP from ADP in the presence of a proton gradient across the membrane which is generated by electron transport complexes of the respiratory chain. ATP synthase complex consist of a soluble F(1) head domain - the catalytic core - and a membrane F(1) domain - the membrane proton channel. These two domains are linked by a central stalk rotating inside the F(1) region and a stationary peripheral stalk. During catalysis, ATP synthesis in the catalytic domain of F(1) is coupled via a rotary mechanism of the central stalk subunits to proton translocation. With the subunit c (ATP5MC1), forms the proton-conducting channel in the F(0) domain, that contains two crucial half-channels (inlet and outlet) that facilitate proton movement from the mitochondrial intermembrane space (IMS) into the matrix. Protons are taken up via the inlet half-channel and released through the outlet half-channel, following a Grotthuss mechanism.</text>
</comment>
<comment type="catalytic activity">
    <reaction evidence="1">
        <text>H(+)(in) = H(+)(out)</text>
        <dbReference type="Rhea" id="RHEA:34979"/>
        <dbReference type="ChEBI" id="CHEBI:15378"/>
    </reaction>
</comment>
<comment type="subunit">
    <text evidence="1">Component of the ATP synthase complex composed at least of ATP5F1A/subunit alpha, ATP5F1B/subunit beta, ATP5MC1/subunit c (homooctomer), MT-ATP6/subunit a, MT-ATP8/subunit 8, ATP5ME/subunit e, ATP5MF/subunit f, ATP5MG/subunit g, ATP5MK/subunit k, ATP5MJ/subunit j, ATP5F1C/subunit gamma, ATP5F1D/subunit delta, ATP5F1E/subunit epsilon, ATP5PF/subunit F6, ATP5PB/subunit b, ATP5PD/subunit d, ATP5PO/subunit OSCP. ATP synthase complex consists of a soluble F(1) head domain (subunits alpha(3) and beta(3)) - the catalytic core - and a membrane F(0) domain - the membrane proton channel (subunits c, a, 8, e, f, g, k and j). These two domains are linked by a central stalk (subunits gamma, delta, and epsilon) rotating inside the F1 region and a stationary peripheral stalk (subunits F6, b, d, and OSCP). Interacts with DNAJC30; interaction is direct.</text>
</comment>
<comment type="subcellular location">
    <subcellularLocation>
        <location>Mitochondrion inner membrane</location>
        <topology>Multi-pass membrane protein</topology>
    </subcellularLocation>
</comment>
<comment type="similarity">
    <text evidence="3">Belongs to the ATPase A chain family.</text>
</comment>
<name>ATP6_SALSA</name>
<keyword id="KW-0066">ATP synthesis</keyword>
<keyword id="KW-0138">CF(0)</keyword>
<keyword id="KW-0375">Hydrogen ion transport</keyword>
<keyword id="KW-0406">Ion transport</keyword>
<keyword id="KW-0472">Membrane</keyword>
<keyword id="KW-0496">Mitochondrion</keyword>
<keyword id="KW-0999">Mitochondrion inner membrane</keyword>
<keyword id="KW-1185">Reference proteome</keyword>
<keyword id="KW-0812">Transmembrane</keyword>
<keyword id="KW-1133">Transmembrane helix</keyword>
<keyword id="KW-0813">Transport</keyword>
<proteinExistence type="inferred from homology"/>